<name>PPID_BUCBP</name>
<proteinExistence type="uncertain"/>
<gene>
    <name type="primary">ppiD</name>
    <name type="ordered locus">bbp_422</name>
</gene>
<reference key="1">
    <citation type="journal article" date="2003" name="Proc. Natl. Acad. Sci. U.S.A.">
        <title>Reductive genome evolution in Buchnera aphidicola.</title>
        <authorList>
            <person name="van Ham R.C.H.J."/>
            <person name="Kamerbeek J."/>
            <person name="Palacios C."/>
            <person name="Rausell C."/>
            <person name="Abascal F."/>
            <person name="Bastolla U."/>
            <person name="Fernandez J.M."/>
            <person name="Jimenez L."/>
            <person name="Postigo M."/>
            <person name="Silva F.J."/>
            <person name="Tamames J."/>
            <person name="Viguera E."/>
            <person name="Latorre A."/>
            <person name="Valencia A."/>
            <person name="Moran F."/>
            <person name="Moya A."/>
        </authorList>
    </citation>
    <scope>NUCLEOTIDE SEQUENCE [LARGE SCALE GENOMIC DNA]</scope>
    <source>
        <strain>Bp</strain>
    </source>
</reference>
<accession>Q89A98</accession>
<organism>
    <name type="scientific">Buchnera aphidicola subsp. Baizongia pistaciae (strain Bp)</name>
    <dbReference type="NCBI Taxonomy" id="224915"/>
    <lineage>
        <taxon>Bacteria</taxon>
        <taxon>Pseudomonadati</taxon>
        <taxon>Pseudomonadota</taxon>
        <taxon>Gammaproteobacteria</taxon>
        <taxon>Enterobacterales</taxon>
        <taxon>Erwiniaceae</taxon>
        <taxon>Buchnera</taxon>
    </lineage>
</organism>
<feature type="chain" id="PRO_0000193422" description="Putative chaperone PpiD">
    <location>
        <begin position="1"/>
        <end position="511"/>
    </location>
</feature>
<feature type="topological domain" description="Cytoplasmic" evidence="1">
    <location>
        <begin position="1"/>
        <end position="8"/>
    </location>
</feature>
<feature type="transmembrane region" description="Helical" evidence="2">
    <location>
        <begin position="9"/>
        <end position="29"/>
    </location>
</feature>
<feature type="topological domain" description="Extracellular" evidence="1">
    <location>
        <begin position="30"/>
        <end position="511"/>
    </location>
</feature>
<feature type="domain" description="PpiC; truncated" evidence="3">
    <location>
        <begin position="227"/>
        <end position="281"/>
    </location>
</feature>
<dbReference type="EMBL" id="AE016826">
    <property type="protein sequence ID" value="AAO27132.1"/>
    <property type="molecule type" value="Genomic_DNA"/>
</dbReference>
<dbReference type="RefSeq" id="WP_011091533.1">
    <property type="nucleotide sequence ID" value="NC_004545.1"/>
</dbReference>
<dbReference type="STRING" id="224915.bbp_422"/>
<dbReference type="KEGG" id="bab:bbp_422"/>
<dbReference type="eggNOG" id="COG0760">
    <property type="taxonomic scope" value="Bacteria"/>
</dbReference>
<dbReference type="HOGENOM" id="CLU_023843_1_1_6"/>
<dbReference type="OrthoDB" id="9812372at2"/>
<dbReference type="Proteomes" id="UP000000601">
    <property type="component" value="Chromosome"/>
</dbReference>
<dbReference type="GO" id="GO:0005886">
    <property type="term" value="C:plasma membrane"/>
    <property type="evidence" value="ECO:0007669"/>
    <property type="project" value="UniProtKB-SubCell"/>
</dbReference>
<dbReference type="GO" id="GO:0003755">
    <property type="term" value="F:peptidyl-prolyl cis-trans isomerase activity"/>
    <property type="evidence" value="ECO:0007669"/>
    <property type="project" value="InterPro"/>
</dbReference>
<dbReference type="InterPro" id="IPR000297">
    <property type="entry name" value="PPIase_PpiC"/>
</dbReference>
<dbReference type="InterPro" id="IPR052029">
    <property type="entry name" value="PpiD_chaperone"/>
</dbReference>
<dbReference type="InterPro" id="IPR027304">
    <property type="entry name" value="Trigger_fact/SurA_dom_sf"/>
</dbReference>
<dbReference type="PANTHER" id="PTHR47529">
    <property type="entry name" value="PEPTIDYL-PROLYL CIS-TRANS ISOMERASE D"/>
    <property type="match status" value="1"/>
</dbReference>
<dbReference type="PANTHER" id="PTHR47529:SF1">
    <property type="entry name" value="PERIPLASMIC CHAPERONE PPID"/>
    <property type="match status" value="1"/>
</dbReference>
<dbReference type="Pfam" id="PF13145">
    <property type="entry name" value="Rotamase_2"/>
    <property type="match status" value="1"/>
</dbReference>
<dbReference type="Pfam" id="PF13624">
    <property type="entry name" value="SurA_N_3"/>
    <property type="match status" value="1"/>
</dbReference>
<dbReference type="SUPFAM" id="SSF109998">
    <property type="entry name" value="Triger factor/SurA peptide-binding domain-like"/>
    <property type="match status" value="1"/>
</dbReference>
<sequence length="511" mass="61944">MHKLTSKLSNLILLLLIIIIFISLILTNFNNYLLENLSEYEIKINNTEISREEFIQRYNLECFYNDKNFKNDIITNPKNPKYISEIYNITLSNIIYESLLQQYVHQLHFNIDYSHVKNYIYKQTIFRQNQKFNKEKYYEYLKKLQISSNEYIKKVMTYLEIKEFIKTLTNTDFILNNEKNNILKLFEQGRIVNKSYVNLNNLKLIEHISNKELKRYYINHKHQFLSPKKFKISYFLINKNNVFVPCIKKFYFKNKDNTFQHELFLQHKKSKKQNDNIIKKLLTTHTNTSQFKNIIQKNNICIHHTPWLTQTLYKHEKLPKKLLKYIINNNILFHNNKNTIKNYPTIIHMNNNNAYVLWIQKYEKATIENFSKKIRKKIINILKNEHSKKIRYQIVQKIVYQLNHGDTNLFSQLKLKFSNSEYYSRFNTNTLTNKIFSLPIPKKGQKIYFIFHDQKKLFLYQFSNIFYFKLTKKQKKMIASYISQSHSEIILNAILENLYKTAHISYKGYIN</sequence>
<protein>
    <recommendedName>
        <fullName evidence="1">Putative chaperone PpiD</fullName>
    </recommendedName>
</protein>
<evidence type="ECO:0000250" key="1">
    <source>
        <dbReference type="UniProtKB" id="P0ADY1"/>
    </source>
</evidence>
<evidence type="ECO:0000255" key="2"/>
<evidence type="ECO:0000305" key="3"/>
<keyword id="KW-1003">Cell membrane</keyword>
<keyword id="KW-0143">Chaperone</keyword>
<keyword id="KW-0472">Membrane</keyword>
<keyword id="KW-1185">Reference proteome</keyword>
<keyword id="KW-0812">Transmembrane</keyword>
<keyword id="KW-1133">Transmembrane helix</keyword>
<comment type="function">
    <text evidence="1">Chaperone that functions as a gatekeeper on the extracellular side of the Sec translocon. Facilitates the translocation of precursor proteins across Sec by interacting with the translocating substrate. Also plays a role in the release of newly synthesized secreted proteins at the extracellular exit site of the Sec translocon.</text>
</comment>
<comment type="subunit">
    <text evidence="1">Interacts with the Sec translocon (By similarity). Binds to the lateral gate of SecY (By similarity). Forms a complex with YfgM (By similarity).</text>
</comment>
<comment type="subcellular location">
    <subcellularLocation>
        <location evidence="1">Cell membrane</location>
        <topology evidence="1">Single-pass type II membrane protein</topology>
        <orientation evidence="1">Extracellular side</orientation>
    </subcellularLocation>
    <text evidence="1">Located at the lateral gate of SecY.</text>
</comment>
<comment type="similarity">
    <text evidence="3">Belongs to the PpiD chaperone family.</text>
</comment>
<comment type="caution">
    <text evidence="3">Could be the product of a pseudogene. Contains an internal deletion relative to its orthologs.</text>
</comment>